<proteinExistence type="evidence at protein level"/>
<comment type="catalytic activity">
    <reaction>
        <text>Preferential cleavage in B chain of insulin: 3-Asn-|-Gln-4, 13-Gly-|-Ala-14, and 26-Tyr-|-Thr-27.</text>
        <dbReference type="EC" id="3.4.23.19"/>
    </reaction>
</comment>
<comment type="subunit">
    <text>Heterodimer of two noncovalently bound light and heavy chains.</text>
</comment>
<comment type="similarity">
    <text evidence="4">Belongs to the peptidase G1 family.</text>
</comment>
<accession>P24665</accession>
<organism>
    <name type="scientific">Aspergillus niger</name>
    <dbReference type="NCBI Taxonomy" id="5061"/>
    <lineage>
        <taxon>Eukaryota</taxon>
        <taxon>Fungi</taxon>
        <taxon>Dikarya</taxon>
        <taxon>Ascomycota</taxon>
        <taxon>Pezizomycotina</taxon>
        <taxon>Eurotiomycetes</taxon>
        <taxon>Eurotiomycetidae</taxon>
        <taxon>Eurotiales</taxon>
        <taxon>Aspergillaceae</taxon>
        <taxon>Aspergillus</taxon>
        <taxon>Aspergillus subgen. Circumdati</taxon>
    </lineage>
</organism>
<feature type="signal peptide" evidence="1">
    <location>
        <begin position="1"/>
        <end position="18"/>
    </location>
</feature>
<feature type="propeptide" id="PRO_0000028495" evidence="3">
    <location>
        <begin position="19"/>
        <end position="59"/>
    </location>
</feature>
<feature type="chain" id="PRO_0000028496" description="Aspergillopepsin-2 light chain">
    <location>
        <begin position="60"/>
        <end position="98"/>
    </location>
</feature>
<feature type="propeptide" id="PRO_0000028497" evidence="3">
    <location>
        <begin position="99"/>
        <end position="109"/>
    </location>
</feature>
<feature type="chain" id="PRO_0000028498" description="Aspergillopepsin-2 heavy chain">
    <location>
        <begin position="110"/>
        <end position="282"/>
    </location>
</feature>
<feature type="region of interest" description="Disordered" evidence="2">
    <location>
        <begin position="27"/>
        <end position="46"/>
    </location>
</feature>
<feature type="compositionally biased region" description="Basic residues" evidence="2">
    <location>
        <begin position="27"/>
        <end position="39"/>
    </location>
</feature>
<feature type="modified residue" description="Pyrrolidone carboxylic acid" evidence="3">
    <location>
        <position position="110"/>
    </location>
</feature>
<feature type="disulfide bond" evidence="3">
    <location>
        <begin position="115"/>
        <end position="139"/>
    </location>
</feature>
<feature type="disulfide bond" evidence="3">
    <location>
        <begin position="127"/>
        <end position="210"/>
    </location>
</feature>
<feature type="strand" evidence="5">
    <location>
        <begin position="61"/>
        <end position="72"/>
    </location>
</feature>
<feature type="strand" evidence="5">
    <location>
        <begin position="76"/>
        <end position="84"/>
    </location>
</feature>
<feature type="strand" evidence="6">
    <location>
        <begin position="94"/>
        <end position="96"/>
    </location>
</feature>
<feature type="strand" evidence="5">
    <location>
        <begin position="113"/>
        <end position="122"/>
    </location>
</feature>
<feature type="strand" evidence="5">
    <location>
        <begin position="124"/>
        <end position="126"/>
    </location>
</feature>
<feature type="strand" evidence="5">
    <location>
        <begin position="131"/>
        <end position="141"/>
    </location>
</feature>
<feature type="strand" evidence="5">
    <location>
        <begin position="144"/>
        <end position="154"/>
    </location>
</feature>
<feature type="strand" evidence="5">
    <location>
        <begin position="159"/>
        <end position="161"/>
    </location>
</feature>
<feature type="strand" evidence="5">
    <location>
        <begin position="171"/>
        <end position="180"/>
    </location>
</feature>
<feature type="strand" evidence="5">
    <location>
        <begin position="183"/>
        <end position="190"/>
    </location>
</feature>
<feature type="turn" evidence="5">
    <location>
        <begin position="191"/>
        <end position="194"/>
    </location>
</feature>
<feature type="strand" evidence="5">
    <location>
        <begin position="195"/>
        <end position="201"/>
    </location>
</feature>
<feature type="strand" evidence="5">
    <location>
        <begin position="213"/>
        <end position="219"/>
    </location>
</feature>
<feature type="strand" evidence="5">
    <location>
        <begin position="235"/>
        <end position="245"/>
    </location>
</feature>
<feature type="strand" evidence="5">
    <location>
        <begin position="248"/>
        <end position="250"/>
    </location>
</feature>
<feature type="helix" evidence="6">
    <location>
        <begin position="252"/>
        <end position="254"/>
    </location>
</feature>
<feature type="strand" evidence="5">
    <location>
        <begin position="256"/>
        <end position="262"/>
    </location>
</feature>
<feature type="strand" evidence="5">
    <location>
        <begin position="268"/>
        <end position="272"/>
    </location>
</feature>
<feature type="strand" evidence="5">
    <location>
        <begin position="277"/>
        <end position="281"/>
    </location>
</feature>
<sequence>MKFSTILTGSLFATAALAAPLTEKRRARKEARAAGKRHSNPPYIPGSDKEILKLNGTTNEEYSSNWAGAVLIGDGYTKVTGEFTVPSVSAGSSGSSGYGGGYGYWKNKRQSEEYCASAWVGIDGDTCETAILQTGVDFCYEDGQTSYDAWYEWYPDYAYDFSDITISEGDSIKVTVEATSKSSGSATVENLTTGQSVTHTFSGNVEGDLCETNAEWIVEDFESGDSLVAFADFGSVTFTNAEATSGGSTVGPSDATVMDIEQDGSVLTETSVSGDSVTVTYV</sequence>
<evidence type="ECO:0000255" key="1"/>
<evidence type="ECO:0000256" key="2">
    <source>
        <dbReference type="SAM" id="MobiDB-lite"/>
    </source>
</evidence>
<evidence type="ECO:0000269" key="3">
    <source>
    </source>
</evidence>
<evidence type="ECO:0000305" key="4"/>
<evidence type="ECO:0007829" key="5">
    <source>
        <dbReference type="PDB" id="1Y43"/>
    </source>
</evidence>
<evidence type="ECO:0007829" key="6">
    <source>
        <dbReference type="PDB" id="3TRS"/>
    </source>
</evidence>
<reference key="1">
    <citation type="journal article" date="1991" name="J. Biol. Chem.">
        <title>The gene and deduced protein sequences of the zymogen of Aspergillus niger acid proteinase A.</title>
        <authorList>
            <person name="Inoue H."/>
            <person name="Kimura T."/>
            <person name="Makabe O."/>
            <person name="Takahashi K."/>
        </authorList>
    </citation>
    <scope>NUCLEOTIDE SEQUENCE [GENOMIC DNA]</scope>
    <source>
        <strain>Var. Macrosporus</strain>
    </source>
</reference>
<reference key="2">
    <citation type="journal article" date="1991" name="J. Biol. Chem.">
        <title>The primary structure of Aspergillus niger acid proteinase A.</title>
        <authorList>
            <person name="Takahashi K."/>
            <person name="Inoue H."/>
            <person name="Sakai K."/>
            <person name="Kohama T."/>
            <person name="Kitahara S."/>
            <person name="Takishima K."/>
            <person name="Tanji M."/>
            <person name="Athauda S.B.P."/>
            <person name="Takahashi T."/>
            <person name="Akanuma H."/>
            <person name="Mamiya G."/>
            <person name="Yamasaki M."/>
        </authorList>
    </citation>
    <scope>PROTEIN SEQUENCE OF 60-98 AND 110-282</scope>
    <scope>PYROGLUTAMATE FORMATION AT GLN-110</scope>
    <source>
        <strain>Var. Macrosporus</strain>
    </source>
</reference>
<protein>
    <recommendedName>
        <fullName>Aspergillopepsin-2</fullName>
        <ecNumber>3.4.23.19</ecNumber>
    </recommendedName>
    <alternativeName>
        <fullName>Acid protease A</fullName>
    </alternativeName>
    <alternativeName>
        <fullName>Aspergillopepsin II</fullName>
    </alternativeName>
    <alternativeName>
        <fullName>Proctase A</fullName>
    </alternativeName>
    <component>
        <recommendedName>
            <fullName>Aspergillopepsin-2 light chain</fullName>
        </recommendedName>
        <alternativeName>
            <fullName>Aspergillopepsin II light chain</fullName>
        </alternativeName>
    </component>
    <component>
        <recommendedName>
            <fullName>Aspergillopepsin-2 heavy chain</fullName>
        </recommendedName>
        <alternativeName>
            <fullName>Aspergillopepsin II heavy chain</fullName>
        </alternativeName>
    </component>
</protein>
<name>PRTA_ASPNG</name>
<dbReference type="EC" id="3.4.23.19"/>
<dbReference type="EMBL" id="M68871">
    <property type="protein sequence ID" value="AAA32687.1"/>
    <property type="molecule type" value="Genomic_DNA"/>
</dbReference>
<dbReference type="PIR" id="A41025">
    <property type="entry name" value="A41025"/>
</dbReference>
<dbReference type="PDB" id="1Y43">
    <property type="method" value="X-ray"/>
    <property type="resolution" value="1.40 A"/>
    <property type="chains" value="A=60-98, B=110-282"/>
</dbReference>
<dbReference type="PDB" id="3TRS">
    <property type="method" value="X-ray"/>
    <property type="resolution" value="1.60 A"/>
    <property type="chains" value="A/C=60-98, B/D=110-282"/>
</dbReference>
<dbReference type="PDBsum" id="1Y43"/>
<dbReference type="PDBsum" id="3TRS"/>
<dbReference type="SMR" id="P24665"/>
<dbReference type="MEROPS" id="G01.002"/>
<dbReference type="PaxDb" id="5061-CADANGAP00000047"/>
<dbReference type="VEuPathDB" id="FungiDB:An01g00530"/>
<dbReference type="VEuPathDB" id="FungiDB:ASPNIDRAFT2_1142023"/>
<dbReference type="VEuPathDB" id="FungiDB:ATCC64974_23000"/>
<dbReference type="VEuPathDB" id="FungiDB:M747DRAFT_296186"/>
<dbReference type="eggNOG" id="ENOG502RJF6">
    <property type="taxonomic scope" value="Eukaryota"/>
</dbReference>
<dbReference type="OrthoDB" id="2862635at2759"/>
<dbReference type="EvolutionaryTrace" id="P24665"/>
<dbReference type="GO" id="GO:0004190">
    <property type="term" value="F:aspartic-type endopeptidase activity"/>
    <property type="evidence" value="ECO:0007669"/>
    <property type="project" value="UniProtKB-KW"/>
</dbReference>
<dbReference type="GO" id="GO:0070007">
    <property type="term" value="F:glutamic-type endopeptidase activity"/>
    <property type="evidence" value="ECO:0007669"/>
    <property type="project" value="InterPro"/>
</dbReference>
<dbReference type="GO" id="GO:0006508">
    <property type="term" value="P:proteolysis"/>
    <property type="evidence" value="ECO:0007669"/>
    <property type="project" value="UniProtKB-KW"/>
</dbReference>
<dbReference type="CDD" id="cd13426">
    <property type="entry name" value="Peptidase_G1"/>
    <property type="match status" value="1"/>
</dbReference>
<dbReference type="Gene3D" id="2.60.120.700">
    <property type="entry name" value="Peptidase G1"/>
    <property type="match status" value="1"/>
</dbReference>
<dbReference type="InterPro" id="IPR013320">
    <property type="entry name" value="ConA-like_dom_sf"/>
</dbReference>
<dbReference type="InterPro" id="IPR000250">
    <property type="entry name" value="Peptidase_G1"/>
</dbReference>
<dbReference type="InterPro" id="IPR038656">
    <property type="entry name" value="Peptidase_G1_sf"/>
</dbReference>
<dbReference type="PANTHER" id="PTHR37536">
    <property type="entry name" value="PUTATIVE (AFU_ORTHOLOGUE AFUA_3G02970)-RELATED"/>
    <property type="match status" value="1"/>
</dbReference>
<dbReference type="PANTHER" id="PTHR37536:SF3">
    <property type="entry name" value="PUTATIVE (AFU_ORTHOLOGUE AFUA_3G02970)-RELATED"/>
    <property type="match status" value="1"/>
</dbReference>
<dbReference type="Pfam" id="PF01828">
    <property type="entry name" value="Peptidase_A4"/>
    <property type="match status" value="1"/>
</dbReference>
<dbReference type="PRINTS" id="PR00977">
    <property type="entry name" value="SCYTLDPTASE"/>
</dbReference>
<dbReference type="SUPFAM" id="SSF49899">
    <property type="entry name" value="Concanavalin A-like lectins/glucanases"/>
    <property type="match status" value="1"/>
</dbReference>
<keyword id="KW-0002">3D-structure</keyword>
<keyword id="KW-0064">Aspartyl protease</keyword>
<keyword id="KW-0165">Cleavage on pair of basic residues</keyword>
<keyword id="KW-0903">Direct protein sequencing</keyword>
<keyword id="KW-1015">Disulfide bond</keyword>
<keyword id="KW-0378">Hydrolase</keyword>
<keyword id="KW-0645">Protease</keyword>
<keyword id="KW-0873">Pyrrolidone carboxylic acid</keyword>
<keyword id="KW-0732">Signal</keyword>
<keyword id="KW-0865">Zymogen</keyword>